<sequence>MSDALPMSPAEFEQALRAKGAYYHIHHPYHVAMYQGRATREQIQGWVANRFYYQVNIPMKDAAILANCPDREVRREWIQRLLDHDGAPGEDGGIEAWLRLGQAVGLDPDQLRSQELVLPGVRFAVDAYVNFARRASWQEAASSSLTELFAPQIHQSRLDSWPQHYPWIDPAGYEYFRTRLGQARRDVEHGLAITLQHYTTRAGQERMLEILQFKLDILWSMLDAMSMAYELNRPPYHSVTQDRVWHKGITL</sequence>
<proteinExistence type="inferred from homology"/>
<evidence type="ECO:0000255" key="1">
    <source>
        <dbReference type="HAMAP-Rule" id="MF_00654"/>
    </source>
</evidence>
<accession>B0KJ68</accession>
<reference key="1">
    <citation type="submission" date="2008-01" db="EMBL/GenBank/DDBJ databases">
        <title>Complete sequence of Pseudomonas putida GB-1.</title>
        <authorList>
            <consortium name="US DOE Joint Genome Institute"/>
            <person name="Copeland A."/>
            <person name="Lucas S."/>
            <person name="Lapidus A."/>
            <person name="Barry K."/>
            <person name="Glavina del Rio T."/>
            <person name="Dalin E."/>
            <person name="Tice H."/>
            <person name="Pitluck S."/>
            <person name="Bruce D."/>
            <person name="Goodwin L."/>
            <person name="Chertkov O."/>
            <person name="Brettin T."/>
            <person name="Detter J.C."/>
            <person name="Han C."/>
            <person name="Kuske C.R."/>
            <person name="Schmutz J."/>
            <person name="Larimer F."/>
            <person name="Land M."/>
            <person name="Hauser L."/>
            <person name="Kyrpides N."/>
            <person name="Kim E."/>
            <person name="McCarthy J.K."/>
            <person name="Richardson P."/>
        </authorList>
    </citation>
    <scope>NUCLEOTIDE SEQUENCE [LARGE SCALE GENOMIC DNA]</scope>
    <source>
        <strain>GB-1</strain>
    </source>
</reference>
<protein>
    <recommendedName>
        <fullName evidence="1">Pyrroloquinoline-quinone synthase</fullName>
        <ecNumber evidence="1">1.3.3.11</ecNumber>
    </recommendedName>
    <alternativeName>
        <fullName evidence="1">Coenzyme PQQ synthesis protein C</fullName>
    </alternativeName>
    <alternativeName>
        <fullName evidence="1">Pyrroloquinoline quinone biosynthesis protein C</fullName>
    </alternativeName>
</protein>
<gene>
    <name evidence="1" type="primary">pqqC</name>
    <name type="ordered locus">PputGB1_0407</name>
</gene>
<keyword id="KW-0560">Oxidoreductase</keyword>
<keyword id="KW-0884">PQQ biosynthesis</keyword>
<name>PQQC_PSEPG</name>
<dbReference type="EC" id="1.3.3.11" evidence="1"/>
<dbReference type="EMBL" id="CP000926">
    <property type="protein sequence ID" value="ABY96318.1"/>
    <property type="molecule type" value="Genomic_DNA"/>
</dbReference>
<dbReference type="RefSeq" id="WP_012270176.1">
    <property type="nucleotide sequence ID" value="NC_010322.1"/>
</dbReference>
<dbReference type="SMR" id="B0KJ68"/>
<dbReference type="KEGG" id="ppg:PputGB1_0407"/>
<dbReference type="eggNOG" id="COG5424">
    <property type="taxonomic scope" value="Bacteria"/>
</dbReference>
<dbReference type="HOGENOM" id="CLU_080136_0_0_6"/>
<dbReference type="UniPathway" id="UPA00539"/>
<dbReference type="Proteomes" id="UP000002157">
    <property type="component" value="Chromosome"/>
</dbReference>
<dbReference type="GO" id="GO:0033732">
    <property type="term" value="F:pyrroloquinoline-quinone synthase activity"/>
    <property type="evidence" value="ECO:0007669"/>
    <property type="project" value="UniProtKB-EC"/>
</dbReference>
<dbReference type="GO" id="GO:0018189">
    <property type="term" value="P:pyrroloquinoline quinone biosynthetic process"/>
    <property type="evidence" value="ECO:0007669"/>
    <property type="project" value="UniProtKB-UniRule"/>
</dbReference>
<dbReference type="GO" id="GO:0006790">
    <property type="term" value="P:sulfur compound metabolic process"/>
    <property type="evidence" value="ECO:0007669"/>
    <property type="project" value="UniProtKB-ARBA"/>
</dbReference>
<dbReference type="CDD" id="cd19370">
    <property type="entry name" value="TenA_PqqC"/>
    <property type="match status" value="1"/>
</dbReference>
<dbReference type="Gene3D" id="1.20.910.10">
    <property type="entry name" value="Heme oxygenase-like"/>
    <property type="match status" value="1"/>
</dbReference>
<dbReference type="HAMAP" id="MF_00654">
    <property type="entry name" value="PQQ_syn_PqqC"/>
    <property type="match status" value="1"/>
</dbReference>
<dbReference type="InterPro" id="IPR016084">
    <property type="entry name" value="Haem_Oase-like_multi-hlx"/>
</dbReference>
<dbReference type="InterPro" id="IPR011845">
    <property type="entry name" value="PqqC"/>
</dbReference>
<dbReference type="InterPro" id="IPR039068">
    <property type="entry name" value="PqqC-like"/>
</dbReference>
<dbReference type="InterPro" id="IPR004305">
    <property type="entry name" value="Thiaminase-2/PQQC"/>
</dbReference>
<dbReference type="NCBIfam" id="TIGR02111">
    <property type="entry name" value="PQQ_syn_pqqC"/>
    <property type="match status" value="1"/>
</dbReference>
<dbReference type="PANTHER" id="PTHR40279:SF3">
    <property type="entry name" value="4-AMINOBENZOATE SYNTHASE"/>
    <property type="match status" value="1"/>
</dbReference>
<dbReference type="PANTHER" id="PTHR40279">
    <property type="entry name" value="PQQC-LIKE PROTEIN"/>
    <property type="match status" value="1"/>
</dbReference>
<dbReference type="Pfam" id="PF03070">
    <property type="entry name" value="TENA_THI-4"/>
    <property type="match status" value="1"/>
</dbReference>
<dbReference type="SUPFAM" id="SSF48613">
    <property type="entry name" value="Heme oxygenase-like"/>
    <property type="match status" value="1"/>
</dbReference>
<organism>
    <name type="scientific">Pseudomonas putida (strain GB-1)</name>
    <dbReference type="NCBI Taxonomy" id="76869"/>
    <lineage>
        <taxon>Bacteria</taxon>
        <taxon>Pseudomonadati</taxon>
        <taxon>Pseudomonadota</taxon>
        <taxon>Gammaproteobacteria</taxon>
        <taxon>Pseudomonadales</taxon>
        <taxon>Pseudomonadaceae</taxon>
        <taxon>Pseudomonas</taxon>
    </lineage>
</organism>
<comment type="function">
    <text evidence="1">Ring cyclization and eight-electron oxidation of 3a-(2-amino-2-carboxyethyl)-4,5-dioxo-4,5,6,7,8,9-hexahydroquinoline-7,9-dicarboxylic-acid to PQQ.</text>
</comment>
<comment type="catalytic activity">
    <reaction evidence="1">
        <text>6-(2-amino-2-carboxyethyl)-7,8-dioxo-1,2,3,4,7,8-hexahydroquinoline-2,4-dicarboxylate + 3 O2 = pyrroloquinoline quinone + 2 H2O2 + 2 H2O + H(+)</text>
        <dbReference type="Rhea" id="RHEA:10692"/>
        <dbReference type="ChEBI" id="CHEBI:15377"/>
        <dbReference type="ChEBI" id="CHEBI:15378"/>
        <dbReference type="ChEBI" id="CHEBI:15379"/>
        <dbReference type="ChEBI" id="CHEBI:16240"/>
        <dbReference type="ChEBI" id="CHEBI:58442"/>
        <dbReference type="ChEBI" id="CHEBI:58778"/>
        <dbReference type="EC" id="1.3.3.11"/>
    </reaction>
</comment>
<comment type="pathway">
    <text evidence="1">Cofactor biosynthesis; pyrroloquinoline quinone biosynthesis.</text>
</comment>
<comment type="similarity">
    <text evidence="1">Belongs to the PqqC family.</text>
</comment>
<feature type="chain" id="PRO_1000082784" description="Pyrroloquinoline-quinone synthase">
    <location>
        <begin position="1"/>
        <end position="251"/>
    </location>
</feature>